<sequence>MAIERTLSIIKPDAVAKNVIGQIYARFEAAGLKIAAARMIHLSRAEAEQFYAVHKERPFFKDLVDFMISGPVMVQALEGENAVLKNRELMGATDPKKAAPGTIRADFADSIDANAVHGSDAAETAQVEVAFFFPGLNIYSR</sequence>
<protein>
    <recommendedName>
        <fullName evidence="1">Nucleoside diphosphate kinase</fullName>
        <shortName evidence="1">NDK</shortName>
        <shortName evidence="1">NDP kinase</shortName>
        <ecNumber evidence="1">2.7.4.6</ecNumber>
    </recommendedName>
    <alternativeName>
        <fullName evidence="1">Nucleoside-2-P kinase</fullName>
    </alternativeName>
</protein>
<evidence type="ECO:0000255" key="1">
    <source>
        <dbReference type="HAMAP-Rule" id="MF_00451"/>
    </source>
</evidence>
<organism>
    <name type="scientific">Acidovorax sp. (strain JS42)</name>
    <dbReference type="NCBI Taxonomy" id="232721"/>
    <lineage>
        <taxon>Bacteria</taxon>
        <taxon>Pseudomonadati</taxon>
        <taxon>Pseudomonadota</taxon>
        <taxon>Betaproteobacteria</taxon>
        <taxon>Burkholderiales</taxon>
        <taxon>Comamonadaceae</taxon>
        <taxon>Acidovorax</taxon>
    </lineage>
</organism>
<keyword id="KW-0067">ATP-binding</keyword>
<keyword id="KW-0963">Cytoplasm</keyword>
<keyword id="KW-0418">Kinase</keyword>
<keyword id="KW-0460">Magnesium</keyword>
<keyword id="KW-0479">Metal-binding</keyword>
<keyword id="KW-0546">Nucleotide metabolism</keyword>
<keyword id="KW-0547">Nucleotide-binding</keyword>
<keyword id="KW-0597">Phosphoprotein</keyword>
<keyword id="KW-0808">Transferase</keyword>
<name>NDK_ACISJ</name>
<feature type="chain" id="PRO_1000026202" description="Nucleoside diphosphate kinase">
    <location>
        <begin position="1"/>
        <end position="141"/>
    </location>
</feature>
<feature type="active site" description="Pros-phosphohistidine intermediate" evidence="1">
    <location>
        <position position="117"/>
    </location>
</feature>
<feature type="binding site" evidence="1">
    <location>
        <position position="11"/>
    </location>
    <ligand>
        <name>ATP</name>
        <dbReference type="ChEBI" id="CHEBI:30616"/>
    </ligand>
</feature>
<feature type="binding site" evidence="1">
    <location>
        <position position="59"/>
    </location>
    <ligand>
        <name>ATP</name>
        <dbReference type="ChEBI" id="CHEBI:30616"/>
    </ligand>
</feature>
<feature type="binding site" evidence="1">
    <location>
        <position position="87"/>
    </location>
    <ligand>
        <name>ATP</name>
        <dbReference type="ChEBI" id="CHEBI:30616"/>
    </ligand>
</feature>
<feature type="binding site" evidence="1">
    <location>
        <position position="93"/>
    </location>
    <ligand>
        <name>ATP</name>
        <dbReference type="ChEBI" id="CHEBI:30616"/>
    </ligand>
</feature>
<feature type="binding site" evidence="1">
    <location>
        <position position="104"/>
    </location>
    <ligand>
        <name>ATP</name>
        <dbReference type="ChEBI" id="CHEBI:30616"/>
    </ligand>
</feature>
<feature type="binding site" evidence="1">
    <location>
        <position position="114"/>
    </location>
    <ligand>
        <name>ATP</name>
        <dbReference type="ChEBI" id="CHEBI:30616"/>
    </ligand>
</feature>
<proteinExistence type="inferred from homology"/>
<accession>A1W573</accession>
<reference key="1">
    <citation type="submission" date="2006-12" db="EMBL/GenBank/DDBJ databases">
        <title>Complete sequence of chromosome 1 of Acidovorax sp. JS42.</title>
        <authorList>
            <person name="Copeland A."/>
            <person name="Lucas S."/>
            <person name="Lapidus A."/>
            <person name="Barry K."/>
            <person name="Detter J.C."/>
            <person name="Glavina del Rio T."/>
            <person name="Dalin E."/>
            <person name="Tice H."/>
            <person name="Pitluck S."/>
            <person name="Chertkov O."/>
            <person name="Brettin T."/>
            <person name="Bruce D."/>
            <person name="Han C."/>
            <person name="Tapia R."/>
            <person name="Gilna P."/>
            <person name="Schmutz J."/>
            <person name="Larimer F."/>
            <person name="Land M."/>
            <person name="Hauser L."/>
            <person name="Kyrpides N."/>
            <person name="Kim E."/>
            <person name="Stahl D."/>
            <person name="Richardson P."/>
        </authorList>
    </citation>
    <scope>NUCLEOTIDE SEQUENCE [LARGE SCALE GENOMIC DNA]</scope>
    <source>
        <strain>JS42</strain>
    </source>
</reference>
<comment type="function">
    <text evidence="1">Major role in the synthesis of nucleoside triphosphates other than ATP. The ATP gamma phosphate is transferred to the NDP beta phosphate via a ping-pong mechanism, using a phosphorylated active-site intermediate.</text>
</comment>
<comment type="catalytic activity">
    <reaction evidence="1">
        <text>a 2'-deoxyribonucleoside 5'-diphosphate + ATP = a 2'-deoxyribonucleoside 5'-triphosphate + ADP</text>
        <dbReference type="Rhea" id="RHEA:44640"/>
        <dbReference type="ChEBI" id="CHEBI:30616"/>
        <dbReference type="ChEBI" id="CHEBI:61560"/>
        <dbReference type="ChEBI" id="CHEBI:73316"/>
        <dbReference type="ChEBI" id="CHEBI:456216"/>
        <dbReference type="EC" id="2.7.4.6"/>
    </reaction>
</comment>
<comment type="catalytic activity">
    <reaction evidence="1">
        <text>a ribonucleoside 5'-diphosphate + ATP = a ribonucleoside 5'-triphosphate + ADP</text>
        <dbReference type="Rhea" id="RHEA:18113"/>
        <dbReference type="ChEBI" id="CHEBI:30616"/>
        <dbReference type="ChEBI" id="CHEBI:57930"/>
        <dbReference type="ChEBI" id="CHEBI:61557"/>
        <dbReference type="ChEBI" id="CHEBI:456216"/>
        <dbReference type="EC" id="2.7.4.6"/>
    </reaction>
</comment>
<comment type="cofactor">
    <cofactor evidence="1">
        <name>Mg(2+)</name>
        <dbReference type="ChEBI" id="CHEBI:18420"/>
    </cofactor>
</comment>
<comment type="subunit">
    <text evidence="1">Homotetramer.</text>
</comment>
<comment type="subcellular location">
    <subcellularLocation>
        <location evidence="1">Cytoplasm</location>
    </subcellularLocation>
</comment>
<comment type="similarity">
    <text evidence="1">Belongs to the NDK family.</text>
</comment>
<dbReference type="EC" id="2.7.4.6" evidence="1"/>
<dbReference type="EMBL" id="CP000539">
    <property type="protein sequence ID" value="ABM41398.1"/>
    <property type="molecule type" value="Genomic_DNA"/>
</dbReference>
<dbReference type="SMR" id="A1W573"/>
<dbReference type="STRING" id="232721.Ajs_1166"/>
<dbReference type="KEGG" id="ajs:Ajs_1166"/>
<dbReference type="eggNOG" id="COG0105">
    <property type="taxonomic scope" value="Bacteria"/>
</dbReference>
<dbReference type="HOGENOM" id="CLU_060216_8_1_4"/>
<dbReference type="Proteomes" id="UP000000645">
    <property type="component" value="Chromosome"/>
</dbReference>
<dbReference type="GO" id="GO:0005737">
    <property type="term" value="C:cytoplasm"/>
    <property type="evidence" value="ECO:0007669"/>
    <property type="project" value="UniProtKB-SubCell"/>
</dbReference>
<dbReference type="GO" id="GO:0005524">
    <property type="term" value="F:ATP binding"/>
    <property type="evidence" value="ECO:0007669"/>
    <property type="project" value="UniProtKB-UniRule"/>
</dbReference>
<dbReference type="GO" id="GO:0046872">
    <property type="term" value="F:metal ion binding"/>
    <property type="evidence" value="ECO:0007669"/>
    <property type="project" value="UniProtKB-KW"/>
</dbReference>
<dbReference type="GO" id="GO:0004550">
    <property type="term" value="F:nucleoside diphosphate kinase activity"/>
    <property type="evidence" value="ECO:0007669"/>
    <property type="project" value="UniProtKB-UniRule"/>
</dbReference>
<dbReference type="GO" id="GO:0006241">
    <property type="term" value="P:CTP biosynthetic process"/>
    <property type="evidence" value="ECO:0007669"/>
    <property type="project" value="UniProtKB-UniRule"/>
</dbReference>
<dbReference type="GO" id="GO:0006183">
    <property type="term" value="P:GTP biosynthetic process"/>
    <property type="evidence" value="ECO:0007669"/>
    <property type="project" value="UniProtKB-UniRule"/>
</dbReference>
<dbReference type="GO" id="GO:0006228">
    <property type="term" value="P:UTP biosynthetic process"/>
    <property type="evidence" value="ECO:0007669"/>
    <property type="project" value="UniProtKB-UniRule"/>
</dbReference>
<dbReference type="CDD" id="cd04413">
    <property type="entry name" value="NDPk_I"/>
    <property type="match status" value="1"/>
</dbReference>
<dbReference type="FunFam" id="3.30.70.141:FF:000001">
    <property type="entry name" value="Nucleoside diphosphate kinase"/>
    <property type="match status" value="1"/>
</dbReference>
<dbReference type="Gene3D" id="3.30.70.141">
    <property type="entry name" value="Nucleoside diphosphate kinase-like domain"/>
    <property type="match status" value="1"/>
</dbReference>
<dbReference type="HAMAP" id="MF_00451">
    <property type="entry name" value="NDP_kinase"/>
    <property type="match status" value="1"/>
</dbReference>
<dbReference type="InterPro" id="IPR034907">
    <property type="entry name" value="NDK-like_dom"/>
</dbReference>
<dbReference type="InterPro" id="IPR036850">
    <property type="entry name" value="NDK-like_dom_sf"/>
</dbReference>
<dbReference type="InterPro" id="IPR001564">
    <property type="entry name" value="Nucleoside_diP_kinase"/>
</dbReference>
<dbReference type="NCBIfam" id="NF001908">
    <property type="entry name" value="PRK00668.1"/>
    <property type="match status" value="1"/>
</dbReference>
<dbReference type="PANTHER" id="PTHR46161">
    <property type="entry name" value="NUCLEOSIDE DIPHOSPHATE KINASE"/>
    <property type="match status" value="1"/>
</dbReference>
<dbReference type="PANTHER" id="PTHR46161:SF3">
    <property type="entry name" value="NUCLEOSIDE DIPHOSPHATE KINASE DDB_G0292928-RELATED"/>
    <property type="match status" value="1"/>
</dbReference>
<dbReference type="Pfam" id="PF00334">
    <property type="entry name" value="NDK"/>
    <property type="match status" value="1"/>
</dbReference>
<dbReference type="PRINTS" id="PR01243">
    <property type="entry name" value="NUCDPKINASE"/>
</dbReference>
<dbReference type="SMART" id="SM00562">
    <property type="entry name" value="NDK"/>
    <property type="match status" value="1"/>
</dbReference>
<dbReference type="SUPFAM" id="SSF54919">
    <property type="entry name" value="Nucleoside diphosphate kinase, NDK"/>
    <property type="match status" value="1"/>
</dbReference>
<dbReference type="PROSITE" id="PS51374">
    <property type="entry name" value="NDPK_LIKE"/>
    <property type="match status" value="1"/>
</dbReference>
<gene>
    <name evidence="1" type="primary">ndk</name>
    <name type="ordered locus">Ajs_1166</name>
</gene>